<sequence length="314" mass="35588">MKDLSLDEDSDGVDAPRAAQWVDDNDTSGSGESAAEDSSTEASSSRLKTLQSNLSNLPLGALRKAQRVLKQVEPISDSDDSSGDELEDDTGESESEHEPGLGSSKGKEWSVKPRFDISKRSSKHAPTEVTSKRPVTRRRTVVEVPKLVARDPRFLPTAGEFAEEKFQKQYAFLTDAHKTELRTLRENLKRARKFLASSPREHREEREQEVYRLEQAVKRTESLVNKDRLDQVLREALGKATKEEKTKRKQGKGGWWMKESDKRELLTQARYEALAADGGSRAVKKAIEKKQKKVSQKEKKSRPYPPSRKKRRVE</sequence>
<evidence type="ECO:0000250" key="1"/>
<evidence type="ECO:0000255" key="2"/>
<evidence type="ECO:0000256" key="3">
    <source>
        <dbReference type="SAM" id="MobiDB-lite"/>
    </source>
</evidence>
<evidence type="ECO:0000305" key="4"/>
<dbReference type="EMBL" id="DS547091">
    <property type="protein sequence ID" value="EDR14971.1"/>
    <property type="molecule type" value="Genomic_DNA"/>
</dbReference>
<dbReference type="RefSeq" id="XP_001873179.1">
    <property type="nucleotide sequence ID" value="XM_001873144.1"/>
</dbReference>
<dbReference type="SMR" id="B0CPQ8"/>
<dbReference type="FunCoup" id="B0CPQ8">
    <property type="interactions" value="268"/>
</dbReference>
<dbReference type="STRING" id="486041.B0CPQ8"/>
<dbReference type="GeneID" id="6069138"/>
<dbReference type="KEGG" id="lbc:LACBIDRAFT_300621"/>
<dbReference type="HOGENOM" id="CLU_048802_1_0_1"/>
<dbReference type="InParanoid" id="B0CPQ8"/>
<dbReference type="OrthoDB" id="448446at2759"/>
<dbReference type="Proteomes" id="UP000001194">
    <property type="component" value="Unassembled WGS sequence"/>
</dbReference>
<dbReference type="GO" id="GO:0030686">
    <property type="term" value="C:90S preribosome"/>
    <property type="evidence" value="ECO:0007669"/>
    <property type="project" value="TreeGrafter"/>
</dbReference>
<dbReference type="GO" id="GO:0005730">
    <property type="term" value="C:nucleolus"/>
    <property type="evidence" value="ECO:0007669"/>
    <property type="project" value="UniProtKB-SubCell"/>
</dbReference>
<dbReference type="GO" id="GO:0000462">
    <property type="term" value="P:maturation of SSU-rRNA from tricistronic rRNA transcript (SSU-rRNA, 5.8S rRNA, LSU-rRNA)"/>
    <property type="evidence" value="ECO:0007669"/>
    <property type="project" value="TreeGrafter"/>
</dbReference>
<dbReference type="InterPro" id="IPR009292">
    <property type="entry name" value="RRP36"/>
</dbReference>
<dbReference type="PANTHER" id="PTHR21738">
    <property type="entry name" value="RIBOSOMAL RNA PROCESSING PROTEIN 36 HOMOLOG"/>
    <property type="match status" value="1"/>
</dbReference>
<dbReference type="PANTHER" id="PTHR21738:SF0">
    <property type="entry name" value="RIBOSOMAL RNA PROCESSING PROTEIN 36 HOMOLOG"/>
    <property type="match status" value="1"/>
</dbReference>
<dbReference type="Pfam" id="PF06102">
    <property type="entry name" value="RRP36"/>
    <property type="match status" value="1"/>
</dbReference>
<proteinExistence type="inferred from homology"/>
<comment type="function">
    <text evidence="1">Component of the 90S pre-ribosome involved in the maturation of rRNAs. Required for early cleavages of the pre-RNAs in the 40S ribosomal subunit maturation pathway (By similarity).</text>
</comment>
<comment type="subunit">
    <text evidence="1">Associates with 90S and pre-40S pre-ribosomal particles.</text>
</comment>
<comment type="subcellular location">
    <subcellularLocation>
        <location evidence="1">Nucleus</location>
        <location evidence="1">Nucleolus</location>
    </subcellularLocation>
</comment>
<comment type="similarity">
    <text evidence="4">Belongs to the RRP36 family.</text>
</comment>
<keyword id="KW-0175">Coiled coil</keyword>
<keyword id="KW-0539">Nucleus</keyword>
<keyword id="KW-1185">Reference proteome</keyword>
<keyword id="KW-0687">Ribonucleoprotein</keyword>
<keyword id="KW-0690">Ribosome biogenesis</keyword>
<keyword id="KW-0698">rRNA processing</keyword>
<reference key="1">
    <citation type="journal article" date="2008" name="Nature">
        <title>The genome of Laccaria bicolor provides insights into mycorrhizal symbiosis.</title>
        <authorList>
            <person name="Martin F."/>
            <person name="Aerts A."/>
            <person name="Ahren D."/>
            <person name="Brun A."/>
            <person name="Danchin E.G.J."/>
            <person name="Duchaussoy F."/>
            <person name="Gibon J."/>
            <person name="Kohler A."/>
            <person name="Lindquist E."/>
            <person name="Pereda V."/>
            <person name="Salamov A."/>
            <person name="Shapiro H.J."/>
            <person name="Wuyts J."/>
            <person name="Blaudez D."/>
            <person name="Buee M."/>
            <person name="Brokstein P."/>
            <person name="Canbaeck B."/>
            <person name="Cohen D."/>
            <person name="Courty P.E."/>
            <person name="Coutinho P.M."/>
            <person name="Delaruelle C."/>
            <person name="Detter J.C."/>
            <person name="Deveau A."/>
            <person name="DiFazio S."/>
            <person name="Duplessis S."/>
            <person name="Fraissinet-Tachet L."/>
            <person name="Lucic E."/>
            <person name="Frey-Klett P."/>
            <person name="Fourrey C."/>
            <person name="Feussner I."/>
            <person name="Gay G."/>
            <person name="Grimwood J."/>
            <person name="Hoegger P.J."/>
            <person name="Jain P."/>
            <person name="Kilaru S."/>
            <person name="Labbe J."/>
            <person name="Lin Y.C."/>
            <person name="Legue V."/>
            <person name="Le Tacon F."/>
            <person name="Marmeisse R."/>
            <person name="Melayah D."/>
            <person name="Montanini B."/>
            <person name="Muratet M."/>
            <person name="Nehls U."/>
            <person name="Niculita-Hirzel H."/>
            <person name="Oudot-Le Secq M.P."/>
            <person name="Peter M."/>
            <person name="Quesneville H."/>
            <person name="Rajashekar B."/>
            <person name="Reich M."/>
            <person name="Rouhier N."/>
            <person name="Schmutz J."/>
            <person name="Yin T."/>
            <person name="Chalot M."/>
            <person name="Henrissat B."/>
            <person name="Kuees U."/>
            <person name="Lucas S."/>
            <person name="Van de Peer Y."/>
            <person name="Podila G.K."/>
            <person name="Polle A."/>
            <person name="Pukkila P.J."/>
            <person name="Richardson P.M."/>
            <person name="Rouze P."/>
            <person name="Sanders I.R."/>
            <person name="Stajich J.E."/>
            <person name="Tunlid A."/>
            <person name="Tuskan G."/>
            <person name="Grigoriev I.V."/>
        </authorList>
    </citation>
    <scope>NUCLEOTIDE SEQUENCE [LARGE SCALE GENOMIC DNA]</scope>
    <source>
        <strain>S238N-H82 / ATCC MYA-4686</strain>
    </source>
</reference>
<protein>
    <recommendedName>
        <fullName>rRNA biogenesis protein RRP36</fullName>
    </recommendedName>
    <alternativeName>
        <fullName>Ribosomal RNA-processing protein 36</fullName>
    </alternativeName>
</protein>
<accession>B0CPQ8</accession>
<organism>
    <name type="scientific">Laccaria bicolor (strain S238N-H82 / ATCC MYA-4686)</name>
    <name type="common">Bicoloured deceiver</name>
    <name type="synonym">Laccaria laccata var. bicolor</name>
    <dbReference type="NCBI Taxonomy" id="486041"/>
    <lineage>
        <taxon>Eukaryota</taxon>
        <taxon>Fungi</taxon>
        <taxon>Dikarya</taxon>
        <taxon>Basidiomycota</taxon>
        <taxon>Agaricomycotina</taxon>
        <taxon>Agaricomycetes</taxon>
        <taxon>Agaricomycetidae</taxon>
        <taxon>Agaricales</taxon>
        <taxon>Agaricineae</taxon>
        <taxon>Hydnangiaceae</taxon>
        <taxon>Laccaria</taxon>
    </lineage>
</organism>
<feature type="chain" id="PRO_0000397635" description="rRNA biogenesis protein RRP36">
    <location>
        <begin position="1"/>
        <end position="314"/>
    </location>
</feature>
<feature type="region of interest" description="Disordered" evidence="3">
    <location>
        <begin position="1"/>
        <end position="136"/>
    </location>
</feature>
<feature type="region of interest" description="Disordered" evidence="3">
    <location>
        <begin position="239"/>
        <end position="258"/>
    </location>
</feature>
<feature type="region of interest" description="Disordered" evidence="3">
    <location>
        <begin position="274"/>
        <end position="314"/>
    </location>
</feature>
<feature type="coiled-coil region" evidence="2">
    <location>
        <begin position="173"/>
        <end position="224"/>
    </location>
</feature>
<feature type="compositionally biased region" description="Acidic residues" evidence="3">
    <location>
        <begin position="1"/>
        <end position="12"/>
    </location>
</feature>
<feature type="compositionally biased region" description="Polar residues" evidence="3">
    <location>
        <begin position="46"/>
        <end position="56"/>
    </location>
</feature>
<feature type="compositionally biased region" description="Acidic residues" evidence="3">
    <location>
        <begin position="76"/>
        <end position="93"/>
    </location>
</feature>
<feature type="compositionally biased region" description="Basic and acidic residues" evidence="3">
    <location>
        <begin position="94"/>
        <end position="119"/>
    </location>
</feature>
<feature type="compositionally biased region" description="Basic residues" evidence="3">
    <location>
        <begin position="290"/>
        <end position="314"/>
    </location>
</feature>
<gene>
    <name type="primary">RRP36</name>
    <name type="ORF">LACBIDRAFT_300621</name>
</gene>
<name>RRP36_LACBS</name>